<name>RHRE_PEA</name>
<accession>Q9S8P4</accession>
<accession>Q9SC40</accession>
<organism>
    <name type="scientific">Pisum sativum</name>
    <name type="common">Garden pea</name>
    <name type="synonym">Lathyrus oleraceus</name>
    <dbReference type="NCBI Taxonomy" id="3888"/>
    <lineage>
        <taxon>Eukaryota</taxon>
        <taxon>Viridiplantae</taxon>
        <taxon>Streptophyta</taxon>
        <taxon>Embryophyta</taxon>
        <taxon>Tracheophyta</taxon>
        <taxon>Spermatophyta</taxon>
        <taxon>Magnoliopsida</taxon>
        <taxon>eudicotyledons</taxon>
        <taxon>Gunneridae</taxon>
        <taxon>Pentapetalae</taxon>
        <taxon>rosids</taxon>
        <taxon>fabids</taxon>
        <taxon>Fabales</taxon>
        <taxon>Fabaceae</taxon>
        <taxon>Papilionoideae</taxon>
        <taxon>50 kb inversion clade</taxon>
        <taxon>NPAAA clade</taxon>
        <taxon>Hologalegina</taxon>
        <taxon>IRL clade</taxon>
        <taxon>Fabeae</taxon>
        <taxon>Pisum</taxon>
    </lineage>
</organism>
<feature type="signal peptide" evidence="3">
    <location>
        <begin position="1"/>
        <end position="20"/>
    </location>
</feature>
<feature type="chain" id="PRO_0000010842" description="Rhicadhesin receptor">
    <location>
        <begin position="21"/>
        <end position="217"/>
    </location>
</feature>
<feature type="domain" description="Cupin type-1" evidence="2">
    <location>
        <begin position="58"/>
        <end position="207"/>
    </location>
</feature>
<feature type="binding site" evidence="1">
    <location>
        <position position="107"/>
    </location>
    <ligand>
        <name>Mn(2+)</name>
        <dbReference type="ChEBI" id="CHEBI:29035"/>
    </ligand>
</feature>
<feature type="binding site" evidence="1">
    <location>
        <position position="109"/>
    </location>
    <ligand>
        <name>Mn(2+)</name>
        <dbReference type="ChEBI" id="CHEBI:29035"/>
    </ligand>
</feature>
<feature type="binding site" evidence="1">
    <location>
        <position position="114"/>
    </location>
    <ligand>
        <name>Mn(2+)</name>
        <dbReference type="ChEBI" id="CHEBI:29035"/>
    </ligand>
</feature>
<feature type="binding site" evidence="1">
    <location>
        <position position="153"/>
    </location>
    <ligand>
        <name>Mn(2+)</name>
        <dbReference type="ChEBI" id="CHEBI:29035"/>
    </ligand>
</feature>
<feature type="glycosylation site" description="N-linked (GlcNAc...) asparagine" evidence="2">
    <location>
        <position position="50"/>
    </location>
</feature>
<feature type="glycosylation site" description="N-linked (GlcNAc...) asparagine" evidence="2">
    <location>
        <position position="68"/>
    </location>
</feature>
<feature type="disulfide bond" evidence="1">
    <location>
        <begin position="30"/>
        <end position="45"/>
    </location>
</feature>
<feature type="sequence conflict" description="In Ref. 2; AA sequence." evidence="4" ref="2">
    <original>C</original>
    <variation>S</variation>
    <location>
        <position position="45"/>
    </location>
</feature>
<sequence>MKLIAVLLLVVLATATTATAADADALQDLCVADYASVILVNGFACKPASNVTAEDFFSNLLVKQGATNNTFGSLVTGANVQRIPGLNTLGVSMARIDYAPGGLNPPHTHPRATEMVFVLEGQLDVGFITTTNQLIAKTIAKGETFVFPKGLVHFQKNNGWEPATVIAGFNSQLPGTVNIPLTLFNATPPVPDNVLTKAFQIGTKEVQKIKSKFAPKK</sequence>
<evidence type="ECO:0000250" key="1"/>
<evidence type="ECO:0000255" key="2"/>
<evidence type="ECO:0000269" key="3">
    <source>
    </source>
</evidence>
<evidence type="ECO:0000305" key="4"/>
<proteinExistence type="evidence at protein level"/>
<gene>
    <name type="primary">GER1</name>
</gene>
<protein>
    <recommendedName>
        <fullName>Rhicadhesin receptor</fullName>
    </recommendedName>
    <alternativeName>
        <fullName>Germin-like protein</fullName>
    </alternativeName>
</protein>
<comment type="function">
    <text>Putative receptor for bacterial rhicadhesin, an attachment protein of rhizobiaceae.</text>
</comment>
<comment type="subcellular location">
    <subcellularLocation>
        <location>Secreted</location>
        <location>Extracellular space</location>
        <location>Apoplast</location>
    </subcellularLocation>
    <subcellularLocation>
        <location>Secreted</location>
        <location>Cell wall</location>
    </subcellularLocation>
</comment>
<comment type="PTM">
    <text>Glycosylated.</text>
</comment>
<comment type="similarity">
    <text evidence="4">Belongs to the germin family.</text>
</comment>
<dbReference type="EMBL" id="AJ250832">
    <property type="protein sequence ID" value="CAB65369.1"/>
    <property type="molecule type" value="mRNA"/>
</dbReference>
<dbReference type="SMR" id="Q9S8P4"/>
<dbReference type="GlyCosmos" id="Q9S8P4">
    <property type="glycosylation" value="2 sites, No reported glycans"/>
</dbReference>
<dbReference type="BRENDA" id="1.15.1.1">
    <property type="organism ID" value="4872"/>
</dbReference>
<dbReference type="GO" id="GO:0048046">
    <property type="term" value="C:apoplast"/>
    <property type="evidence" value="ECO:0007669"/>
    <property type="project" value="UniProtKB-SubCell"/>
</dbReference>
<dbReference type="GO" id="GO:0030145">
    <property type="term" value="F:manganese ion binding"/>
    <property type="evidence" value="ECO:0007669"/>
    <property type="project" value="InterPro"/>
</dbReference>
<dbReference type="CDD" id="cd02241">
    <property type="entry name" value="cupin_OxOx"/>
    <property type="match status" value="1"/>
</dbReference>
<dbReference type="FunFam" id="2.60.120.10:FF:000025">
    <property type="entry name" value="germin-like protein subfamily 2 member 1"/>
    <property type="match status" value="1"/>
</dbReference>
<dbReference type="Gene3D" id="2.60.120.10">
    <property type="entry name" value="Jelly Rolls"/>
    <property type="match status" value="1"/>
</dbReference>
<dbReference type="InterPro" id="IPR006045">
    <property type="entry name" value="Cupin_1"/>
</dbReference>
<dbReference type="InterPro" id="IPR001929">
    <property type="entry name" value="Germin"/>
</dbReference>
<dbReference type="InterPro" id="IPR019780">
    <property type="entry name" value="Germin_Mn-BS"/>
</dbReference>
<dbReference type="InterPro" id="IPR014710">
    <property type="entry name" value="RmlC-like_jellyroll"/>
</dbReference>
<dbReference type="InterPro" id="IPR011051">
    <property type="entry name" value="RmlC_Cupin_sf"/>
</dbReference>
<dbReference type="PANTHER" id="PTHR31238">
    <property type="entry name" value="GERMIN-LIKE PROTEIN SUBFAMILY 3 MEMBER 3"/>
    <property type="match status" value="1"/>
</dbReference>
<dbReference type="Pfam" id="PF00190">
    <property type="entry name" value="Cupin_1"/>
    <property type="match status" value="1"/>
</dbReference>
<dbReference type="PRINTS" id="PR00325">
    <property type="entry name" value="GERMIN"/>
</dbReference>
<dbReference type="SMART" id="SM00835">
    <property type="entry name" value="Cupin_1"/>
    <property type="match status" value="1"/>
</dbReference>
<dbReference type="SUPFAM" id="SSF51182">
    <property type="entry name" value="RmlC-like cupins"/>
    <property type="match status" value="1"/>
</dbReference>
<dbReference type="PROSITE" id="PS00725">
    <property type="entry name" value="GERMIN"/>
    <property type="match status" value="1"/>
</dbReference>
<keyword id="KW-0052">Apoplast</keyword>
<keyword id="KW-0134">Cell wall</keyword>
<keyword id="KW-0903">Direct protein sequencing</keyword>
<keyword id="KW-1015">Disulfide bond</keyword>
<keyword id="KW-0325">Glycoprotein</keyword>
<keyword id="KW-0464">Manganese</keyword>
<keyword id="KW-0479">Metal-binding</keyword>
<keyword id="KW-0675">Receptor</keyword>
<keyword id="KW-0964">Secreted</keyword>
<keyword id="KW-0732">Signal</keyword>
<reference key="1">
    <citation type="submission" date="1999-11" db="EMBL/GenBank/DDBJ databases">
        <title>Identification of an oxalate oxidase activity in pea roots, and cloning of cDNAs encoding germin-like proteins.</title>
        <authorList>
            <person name="Wisniewski J.P."/>
            <person name="Bornemann S."/>
            <person name="Brewin N.J."/>
        </authorList>
    </citation>
    <scope>NUCLEOTIDE SEQUENCE [MRNA]</scope>
    <source>
        <strain>cv. Wisconsin Perfection</strain>
        <tissue>Root</tissue>
    </source>
</reference>
<reference key="2">
    <citation type="journal article" date="1994" name="Plant Mol. Biol.">
        <title>Purification and partial characterization of a glycoprotein from pea (Pisum sativum) with receptor activity for rhicadhesin, an attachment protein of Rhizobiaceae.</title>
        <authorList>
            <person name="Swart S."/>
            <person name="Logman T.J."/>
            <person name="Smit G."/>
            <person name="Lugtenberg B.J."/>
            <person name="Kijne J.W."/>
        </authorList>
    </citation>
    <scope>PROTEIN SEQUENCE OF 21-45</scope>
</reference>